<dbReference type="EMBL" id="AY261360">
    <property type="status" value="NOT_ANNOTATED_CDS"/>
    <property type="molecule type" value="Genomic_DNA"/>
</dbReference>
<dbReference type="SMR" id="P0C8H4"/>
<dbReference type="Proteomes" id="UP000000861">
    <property type="component" value="Segment"/>
</dbReference>
<dbReference type="GO" id="GO:0044165">
    <property type="term" value="C:host cell endoplasmic reticulum"/>
    <property type="evidence" value="ECO:0007669"/>
    <property type="project" value="UniProtKB-SubCell"/>
</dbReference>
<dbReference type="GO" id="GO:0033650">
    <property type="term" value="C:host cell mitochondrion"/>
    <property type="evidence" value="ECO:0007669"/>
    <property type="project" value="UniProtKB-SubCell"/>
</dbReference>
<dbReference type="GO" id="GO:0051400">
    <property type="term" value="F:BH domain binding"/>
    <property type="evidence" value="ECO:0007669"/>
    <property type="project" value="TreeGrafter"/>
</dbReference>
<dbReference type="GO" id="GO:0042981">
    <property type="term" value="P:regulation of apoptotic process"/>
    <property type="evidence" value="ECO:0007669"/>
    <property type="project" value="InterPro"/>
</dbReference>
<dbReference type="GO" id="GO:0033668">
    <property type="term" value="P:symbiont-mediated suppression of host apoptosis"/>
    <property type="evidence" value="ECO:0007669"/>
    <property type="project" value="UniProtKB-KW"/>
</dbReference>
<dbReference type="GO" id="GO:0140321">
    <property type="term" value="P:symbiont-mediated suppression of host autophagy"/>
    <property type="evidence" value="ECO:0007669"/>
    <property type="project" value="UniProtKB-KW"/>
</dbReference>
<dbReference type="Gene3D" id="1.10.437.10">
    <property type="entry name" value="Blc2-like"/>
    <property type="match status" value="1"/>
</dbReference>
<dbReference type="InterPro" id="IPR036834">
    <property type="entry name" value="Bcl-2-like_sf"/>
</dbReference>
<dbReference type="InterPro" id="IPR046371">
    <property type="entry name" value="Bcl-2_BH1-3"/>
</dbReference>
<dbReference type="InterPro" id="IPR026298">
    <property type="entry name" value="Bcl-2_fam"/>
</dbReference>
<dbReference type="InterPro" id="IPR002475">
    <property type="entry name" value="Bcl2-like"/>
</dbReference>
<dbReference type="InterPro" id="IPR020717">
    <property type="entry name" value="Bcl2_BH1_motif_CS"/>
</dbReference>
<dbReference type="InterPro" id="IPR020726">
    <property type="entry name" value="Bcl2_BH2_motif_CS"/>
</dbReference>
<dbReference type="PANTHER" id="PTHR11256:SF62">
    <property type="entry name" value="BCL-2 BCL-2 HOMOLOGY REGION 1-3 DOMAIN-CONTAINING PROTEIN"/>
    <property type="match status" value="1"/>
</dbReference>
<dbReference type="PANTHER" id="PTHR11256">
    <property type="entry name" value="BCL-2 RELATED"/>
    <property type="match status" value="1"/>
</dbReference>
<dbReference type="Pfam" id="PF00452">
    <property type="entry name" value="Bcl-2"/>
    <property type="match status" value="1"/>
</dbReference>
<dbReference type="PRINTS" id="PR01862">
    <property type="entry name" value="BCL2FAMILY"/>
</dbReference>
<dbReference type="SMART" id="SM00337">
    <property type="entry name" value="BCL"/>
    <property type="match status" value="1"/>
</dbReference>
<dbReference type="SUPFAM" id="SSF56854">
    <property type="entry name" value="Bcl-2 inhibitors of programmed cell death"/>
    <property type="match status" value="1"/>
</dbReference>
<dbReference type="PROSITE" id="PS50062">
    <property type="entry name" value="BCL2_FAMILY"/>
    <property type="match status" value="1"/>
</dbReference>
<dbReference type="PROSITE" id="PS01080">
    <property type="entry name" value="BH1"/>
    <property type="match status" value="1"/>
</dbReference>
<dbReference type="PROSITE" id="PS01258">
    <property type="entry name" value="BH2"/>
    <property type="match status" value="1"/>
</dbReference>
<proteinExistence type="inferred from homology"/>
<evidence type="ECO:0000250" key="1">
    <source>
        <dbReference type="UniProtKB" id="P42485"/>
    </source>
</evidence>
<evidence type="ECO:0000250" key="2">
    <source>
        <dbReference type="UniProtKB" id="Q07819"/>
    </source>
</evidence>
<evidence type="ECO:0000255" key="3"/>
<evidence type="ECO:0000305" key="4"/>
<organism>
    <name type="scientific">African swine fever virus (isolate Pig/Kenya/KEN-50/1950)</name>
    <name type="common">ASFV</name>
    <dbReference type="NCBI Taxonomy" id="561445"/>
    <lineage>
        <taxon>Viruses</taxon>
        <taxon>Varidnaviria</taxon>
        <taxon>Bamfordvirae</taxon>
        <taxon>Nucleocytoviricota</taxon>
        <taxon>Pokkesviricetes</taxon>
        <taxon>Asfuvirales</taxon>
        <taxon>Asfarviridae</taxon>
        <taxon>Asfivirus</taxon>
        <taxon>African swine fever virus</taxon>
    </lineage>
</organism>
<name>ARBH_ASFK5</name>
<protein>
    <recommendedName>
        <fullName>Apoptosis regulator Bcl-2 homolog</fullName>
    </recommendedName>
</protein>
<feature type="chain" id="PRO_0000355216" description="Apoptosis regulator Bcl-2 homolog">
    <location>
        <begin position="1"/>
        <end position="179"/>
    </location>
</feature>
<feature type="short sequence motif" description="BH1" evidence="3">
    <location>
        <begin position="76"/>
        <end position="95"/>
    </location>
</feature>
<feature type="short sequence motif" description="BH2" evidence="3">
    <location>
        <begin position="126"/>
        <end position="141"/>
    </location>
</feature>
<gene>
    <name type="ordered locus">Ken-053</name>
</gene>
<reference key="1">
    <citation type="submission" date="2003-03" db="EMBL/GenBank/DDBJ databases">
        <title>African swine fever virus genomes.</title>
        <authorList>
            <person name="Kutish G.F."/>
            <person name="Rock D.L."/>
        </authorList>
    </citation>
    <scope>NUCLEOTIDE SEQUENCE [LARGE SCALE GENOMIC DNA]</scope>
</reference>
<organismHost>
    <name type="scientific">Ornithodoros</name>
    <name type="common">relapsing fever ticks</name>
    <dbReference type="NCBI Taxonomy" id="6937"/>
</organismHost>
<organismHost>
    <name type="scientific">Phacochoerus aethiopicus</name>
    <name type="common">Warthog</name>
    <dbReference type="NCBI Taxonomy" id="85517"/>
</organismHost>
<organismHost>
    <name type="scientific">Phacochoerus africanus</name>
    <name type="common">Warthog</name>
    <dbReference type="NCBI Taxonomy" id="41426"/>
</organismHost>
<organismHost>
    <name type="scientific">Potamochoerus larvatus</name>
    <name type="common">Bushpig</name>
    <dbReference type="NCBI Taxonomy" id="273792"/>
</organismHost>
<organismHost>
    <name type="scientific">Sus scrofa</name>
    <name type="common">Pig</name>
    <dbReference type="NCBI Taxonomy" id="9823"/>
</organismHost>
<comment type="function">
    <text evidence="1">Suppresses apoptosis in host cell to promote the viral replication (By similarity). Has the ability to potentially bind to all the members of the proapoptotic Bcl-2 family (By similarity). Inhibits autophagy by interacting with host Beclin 1 (BECN1) (By similarity).</text>
</comment>
<comment type="subunit">
    <text evidence="1">Interacts with host BECN1 (via BH3 homology domain); this interaction allows the virus to inhibit BECN1, and thus autophagy (By similarity). Interacts with host BID (By similarity). Interacts with host BAX (By similarity).</text>
</comment>
<comment type="subcellular location">
    <subcellularLocation>
        <location evidence="1">Host mitochondrion</location>
    </subcellularLocation>
    <subcellularLocation>
        <location evidence="1">Host endoplasmic reticulum</location>
    </subcellularLocation>
</comment>
<comment type="induction">
    <text evidence="1 2">Expressed in the early phase of the viral replicative cycle (By similarity). Expressed in the late phase of the viral replicative cycle (By similarity).</text>
</comment>
<comment type="similarity">
    <text evidence="4">Belongs to the Bcl-2 family.</text>
</comment>
<accession>P0C8H4</accession>
<sequence length="179" mass="21080">MEGEELIYHNIINEILVGYIKYYMNDISEHELSPYQQQIKKILTYYDDCLNKQVTITFSLTSAQEIKTQFTEVVTELFKDLINWGRICGFIVFSARMAKYCKDANNHLESTVITTAYNFMKHNLLPWMISHGGQEEFLAFSLHSDIYSVIFNIKYFLSKFCNHMFLKSCVHLLRNCNLI</sequence>
<keyword id="KW-0244">Early protein</keyword>
<keyword id="KW-1038">Host endoplasmic reticulum</keyword>
<keyword id="KW-1045">Host mitochondrion</keyword>
<keyword id="KW-0945">Host-virus interaction</keyword>
<keyword id="KW-1081">Inhibition of host apoptosis by viral BCL2-like protein</keyword>
<keyword id="KW-1083">Inhibition of host autophagy by virus</keyword>
<keyword id="KW-0426">Late protein</keyword>
<keyword id="KW-1119">Modulation of host cell apoptosis by virus</keyword>